<dbReference type="EC" id="5.3.1.9" evidence="1"/>
<dbReference type="EMBL" id="CP001033">
    <property type="protein sequence ID" value="ACB91289.1"/>
    <property type="molecule type" value="Genomic_DNA"/>
</dbReference>
<dbReference type="RefSeq" id="WP_000018261.1">
    <property type="nucleotide sequence ID" value="NC_010582.1"/>
</dbReference>
<dbReference type="SMR" id="B2IMZ0"/>
<dbReference type="KEGG" id="spw:SPCG_2037"/>
<dbReference type="HOGENOM" id="CLU_037303_0_1_9"/>
<dbReference type="UniPathway" id="UPA00109">
    <property type="reaction ID" value="UER00181"/>
</dbReference>
<dbReference type="UniPathway" id="UPA00138"/>
<dbReference type="GO" id="GO:0005829">
    <property type="term" value="C:cytosol"/>
    <property type="evidence" value="ECO:0007669"/>
    <property type="project" value="TreeGrafter"/>
</dbReference>
<dbReference type="GO" id="GO:0097367">
    <property type="term" value="F:carbohydrate derivative binding"/>
    <property type="evidence" value="ECO:0007669"/>
    <property type="project" value="InterPro"/>
</dbReference>
<dbReference type="GO" id="GO:0004347">
    <property type="term" value="F:glucose-6-phosphate isomerase activity"/>
    <property type="evidence" value="ECO:0007669"/>
    <property type="project" value="UniProtKB-UniRule"/>
</dbReference>
<dbReference type="GO" id="GO:0048029">
    <property type="term" value="F:monosaccharide binding"/>
    <property type="evidence" value="ECO:0007669"/>
    <property type="project" value="TreeGrafter"/>
</dbReference>
<dbReference type="GO" id="GO:0006094">
    <property type="term" value="P:gluconeogenesis"/>
    <property type="evidence" value="ECO:0007669"/>
    <property type="project" value="UniProtKB-UniRule"/>
</dbReference>
<dbReference type="GO" id="GO:0051156">
    <property type="term" value="P:glucose 6-phosphate metabolic process"/>
    <property type="evidence" value="ECO:0007669"/>
    <property type="project" value="TreeGrafter"/>
</dbReference>
<dbReference type="GO" id="GO:0006096">
    <property type="term" value="P:glycolytic process"/>
    <property type="evidence" value="ECO:0007669"/>
    <property type="project" value="UniProtKB-UniRule"/>
</dbReference>
<dbReference type="CDD" id="cd05015">
    <property type="entry name" value="SIS_PGI_1"/>
    <property type="match status" value="1"/>
</dbReference>
<dbReference type="CDD" id="cd05016">
    <property type="entry name" value="SIS_PGI_2"/>
    <property type="match status" value="1"/>
</dbReference>
<dbReference type="FunFam" id="3.40.50.10490:FF:000015">
    <property type="entry name" value="Glucose-6-phosphate isomerase"/>
    <property type="match status" value="1"/>
</dbReference>
<dbReference type="FunFam" id="3.40.50.10490:FF:000016">
    <property type="entry name" value="Glucose-6-phosphate isomerase"/>
    <property type="match status" value="1"/>
</dbReference>
<dbReference type="Gene3D" id="3.40.50.10490">
    <property type="entry name" value="Glucose-6-phosphate isomerase like protein, domain 1"/>
    <property type="match status" value="3"/>
</dbReference>
<dbReference type="HAMAP" id="MF_00473">
    <property type="entry name" value="G6P_isomerase"/>
    <property type="match status" value="1"/>
</dbReference>
<dbReference type="InterPro" id="IPR001672">
    <property type="entry name" value="G6P_Isomerase"/>
</dbReference>
<dbReference type="InterPro" id="IPR018189">
    <property type="entry name" value="Phosphoglucose_isomerase_CS"/>
</dbReference>
<dbReference type="InterPro" id="IPR046348">
    <property type="entry name" value="SIS_dom_sf"/>
</dbReference>
<dbReference type="InterPro" id="IPR035476">
    <property type="entry name" value="SIS_PGI_1"/>
</dbReference>
<dbReference type="InterPro" id="IPR035482">
    <property type="entry name" value="SIS_PGI_2"/>
</dbReference>
<dbReference type="NCBIfam" id="NF010697">
    <property type="entry name" value="PRK14097.1"/>
    <property type="match status" value="1"/>
</dbReference>
<dbReference type="PANTHER" id="PTHR11469">
    <property type="entry name" value="GLUCOSE-6-PHOSPHATE ISOMERASE"/>
    <property type="match status" value="1"/>
</dbReference>
<dbReference type="PANTHER" id="PTHR11469:SF1">
    <property type="entry name" value="GLUCOSE-6-PHOSPHATE ISOMERASE"/>
    <property type="match status" value="1"/>
</dbReference>
<dbReference type="Pfam" id="PF00342">
    <property type="entry name" value="PGI"/>
    <property type="match status" value="1"/>
</dbReference>
<dbReference type="PRINTS" id="PR00662">
    <property type="entry name" value="G6PISOMERASE"/>
</dbReference>
<dbReference type="SUPFAM" id="SSF53697">
    <property type="entry name" value="SIS domain"/>
    <property type="match status" value="1"/>
</dbReference>
<dbReference type="PROSITE" id="PS00765">
    <property type="entry name" value="P_GLUCOSE_ISOMERASE_1"/>
    <property type="match status" value="1"/>
</dbReference>
<dbReference type="PROSITE" id="PS00174">
    <property type="entry name" value="P_GLUCOSE_ISOMERASE_2"/>
    <property type="match status" value="1"/>
</dbReference>
<dbReference type="PROSITE" id="PS51463">
    <property type="entry name" value="P_GLUCOSE_ISOMERASE_3"/>
    <property type="match status" value="1"/>
</dbReference>
<evidence type="ECO:0000255" key="1">
    <source>
        <dbReference type="HAMAP-Rule" id="MF_00473"/>
    </source>
</evidence>
<keyword id="KW-0963">Cytoplasm</keyword>
<keyword id="KW-0312">Gluconeogenesis</keyword>
<keyword id="KW-0324">Glycolysis</keyword>
<keyword id="KW-0413">Isomerase</keyword>
<protein>
    <recommendedName>
        <fullName evidence="1">Glucose-6-phosphate isomerase</fullName>
        <shortName evidence="1">GPI</shortName>
        <ecNumber evidence="1">5.3.1.9</ecNumber>
    </recommendedName>
    <alternativeName>
        <fullName evidence="1">Phosphoglucose isomerase</fullName>
        <shortName evidence="1">PGI</shortName>
    </alternativeName>
    <alternativeName>
        <fullName evidence="1">Phosphohexose isomerase</fullName>
        <shortName evidence="1">PHI</shortName>
    </alternativeName>
</protein>
<gene>
    <name evidence="1" type="primary">pgi</name>
    <name type="ordered locus">SPCG_2037</name>
</gene>
<name>G6PI_STRPS</name>
<reference key="1">
    <citation type="journal article" date="2009" name="BMC Genomics">
        <title>Genome evolution driven by host adaptations results in a more virulent and antimicrobial-resistant Streptococcus pneumoniae serotype 14.</title>
        <authorList>
            <person name="Ding F."/>
            <person name="Tang P."/>
            <person name="Hsu M.-H."/>
            <person name="Cui P."/>
            <person name="Hu S."/>
            <person name="Yu J."/>
            <person name="Chiu C.-H."/>
        </authorList>
    </citation>
    <scope>NUCLEOTIDE SEQUENCE [LARGE SCALE GENOMIC DNA]</scope>
    <source>
        <strain>CGSP14</strain>
    </source>
</reference>
<accession>B2IMZ0</accession>
<sequence>MSHIKFDYSKVLDKFVAPHEVEYMQSQVTAADELIRKGTGAGSDFLGWLDLPEKYDREEFDRILKAAEQIKSDSDVLVVIGIGGSYLGAKAAIDFLNHHFANLQTKEERKAPQILYAGNSISSTYLADLVEYVADKDFSVNVISKSGTTTEPAIAFRVFKELLVKKYGQEEANKRIYATTDRQKGAVKVEADANGWGTFVVPDDIGGRFSVLTAVGLLPIAASGADIKALMEGANAARKDYTSDKISENEAYQYAAVRNILYRKGYATEILVNYEPSLQYFSEWWKQLAGESEGKDQKGIYPTSANFSTDLHSLGQFIQEGTRIMFETVVRVDKPRKNVIIPTLEEDLDGLGYLQGKDVDFVNKKATDGVLLAHTDGDVPNMYVTLPEQDAFTLGYTIYFFELAIALSGYLNAINPFDQPGVEAYKRNMFALLGKPGFEELSKELNARL</sequence>
<comment type="function">
    <text evidence="1">Catalyzes the reversible isomerization of glucose-6-phosphate to fructose-6-phosphate.</text>
</comment>
<comment type="catalytic activity">
    <reaction evidence="1">
        <text>alpha-D-glucose 6-phosphate = beta-D-fructose 6-phosphate</text>
        <dbReference type="Rhea" id="RHEA:11816"/>
        <dbReference type="ChEBI" id="CHEBI:57634"/>
        <dbReference type="ChEBI" id="CHEBI:58225"/>
        <dbReference type="EC" id="5.3.1.9"/>
    </reaction>
</comment>
<comment type="pathway">
    <text evidence="1">Carbohydrate biosynthesis; gluconeogenesis.</text>
</comment>
<comment type="pathway">
    <text evidence="1">Carbohydrate degradation; glycolysis; D-glyceraldehyde 3-phosphate and glycerone phosphate from D-glucose: step 2/4.</text>
</comment>
<comment type="subcellular location">
    <subcellularLocation>
        <location evidence="1">Cytoplasm</location>
    </subcellularLocation>
</comment>
<comment type="similarity">
    <text evidence="1">Belongs to the GPI family.</text>
</comment>
<feature type="chain" id="PRO_1000125767" description="Glucose-6-phosphate isomerase">
    <location>
        <begin position="1"/>
        <end position="449"/>
    </location>
</feature>
<feature type="active site" description="Proton donor" evidence="1">
    <location>
        <position position="291"/>
    </location>
</feature>
<feature type="active site" evidence="1">
    <location>
        <position position="312"/>
    </location>
</feature>
<feature type="active site" evidence="1">
    <location>
        <position position="426"/>
    </location>
</feature>
<proteinExistence type="inferred from homology"/>
<organism>
    <name type="scientific">Streptococcus pneumoniae (strain CGSP14)</name>
    <dbReference type="NCBI Taxonomy" id="516950"/>
    <lineage>
        <taxon>Bacteria</taxon>
        <taxon>Bacillati</taxon>
        <taxon>Bacillota</taxon>
        <taxon>Bacilli</taxon>
        <taxon>Lactobacillales</taxon>
        <taxon>Streptococcaceae</taxon>
        <taxon>Streptococcus</taxon>
    </lineage>
</organism>